<reference key="1">
    <citation type="journal article" date="2001" name="Mech. Dev.">
        <title>Gene trap insertion reveals two open reading frames in the mouse SSeCKS gene: the form predominantly detected in the nervous system is suppressed by the insertion while the other, specific of the testis, remains expressed.</title>
        <authorList>
            <person name="Camus A."/>
            <person name="Mesbah K."/>
            <person name="Rallu M."/>
            <person name="Babinet C."/>
            <person name="Barra J."/>
        </authorList>
    </citation>
    <scope>NUCLEOTIDE SEQUENCE [MRNA] (ISOFORMS 1 AND 2)</scope>
    <scope>TISSUE SPECIFICITY</scope>
    <source>
        <tissue>Testis</tissue>
    </source>
</reference>
<reference key="2">
    <citation type="journal article" date="2002" name="J. Histochem. Cytochem.">
        <title>Induction of Src-suppressed C kinase substrate (SSeCKS) in vascular endothelial cells by bacterial lipopolysaccharide.</title>
        <authorList>
            <person name="Kitamura H."/>
            <person name="Okita K."/>
            <person name="Fujikura D."/>
            <person name="Mori K."/>
            <person name="Iwanaga T."/>
            <person name="Saito M."/>
        </authorList>
    </citation>
    <scope>NUCLEOTIDE SEQUENCE [MRNA] (ISOFORM 1)</scope>
    <source>
        <strain>BALB/cJ</strain>
        <tissue>Testis</tissue>
    </source>
</reference>
<reference key="3">
    <citation type="submission" date="1999-03" db="EMBL/GenBank/DDBJ databases">
        <title>Mouse testicular cell specific gene, GAG12.</title>
        <authorList>
            <person name="Nishina Y."/>
            <person name="Motoda Y."/>
        </authorList>
    </citation>
    <scope>NUCLEOTIDE SEQUENCE [MRNA] (ISOFORM 1)</scope>
    <source>
        <tissue>Testis</tissue>
    </source>
</reference>
<reference key="4">
    <citation type="submission" date="2001-08" db="EMBL/GenBank/DDBJ databases">
        <title>Molecular cloning and characterization of the mouse germ cell lineage protein cDNA, gercelin, encoding the cytoplasmic AKAP, Gercelin / SSeCKS and the potential germ cell-specific nuclear antigen, GENA.</title>
        <authorList>
            <person name="Tsuchida J."/>
            <person name="Tanaka H."/>
            <person name="Yomogida K."/>
            <person name="Nozaki M."/>
            <person name="Maeda N."/>
            <person name="Matsui Y."/>
            <person name="Nishimune Y."/>
        </authorList>
    </citation>
    <scope>NUCLEOTIDE SEQUENCE [MRNA] (ISOFORM 2)</scope>
    <source>
        <tissue>Testis</tissue>
    </source>
</reference>
<reference key="5">
    <citation type="journal article" date="2005" name="Science">
        <title>The transcriptional landscape of the mammalian genome.</title>
        <authorList>
            <person name="Carninci P."/>
            <person name="Kasukawa T."/>
            <person name="Katayama S."/>
            <person name="Gough J."/>
            <person name="Frith M.C."/>
            <person name="Maeda N."/>
            <person name="Oyama R."/>
            <person name="Ravasi T."/>
            <person name="Lenhard B."/>
            <person name="Wells C."/>
            <person name="Kodzius R."/>
            <person name="Shimokawa K."/>
            <person name="Bajic V.B."/>
            <person name="Brenner S.E."/>
            <person name="Batalov S."/>
            <person name="Forrest A.R."/>
            <person name="Zavolan M."/>
            <person name="Davis M.J."/>
            <person name="Wilming L.G."/>
            <person name="Aidinis V."/>
            <person name="Allen J.E."/>
            <person name="Ambesi-Impiombato A."/>
            <person name="Apweiler R."/>
            <person name="Aturaliya R.N."/>
            <person name="Bailey T.L."/>
            <person name="Bansal M."/>
            <person name="Baxter L."/>
            <person name="Beisel K.W."/>
            <person name="Bersano T."/>
            <person name="Bono H."/>
            <person name="Chalk A.M."/>
            <person name="Chiu K.P."/>
            <person name="Choudhary V."/>
            <person name="Christoffels A."/>
            <person name="Clutterbuck D.R."/>
            <person name="Crowe M.L."/>
            <person name="Dalla E."/>
            <person name="Dalrymple B.P."/>
            <person name="de Bono B."/>
            <person name="Della Gatta G."/>
            <person name="di Bernardo D."/>
            <person name="Down T."/>
            <person name="Engstrom P."/>
            <person name="Fagiolini M."/>
            <person name="Faulkner G."/>
            <person name="Fletcher C.F."/>
            <person name="Fukushima T."/>
            <person name="Furuno M."/>
            <person name="Futaki S."/>
            <person name="Gariboldi M."/>
            <person name="Georgii-Hemming P."/>
            <person name="Gingeras T.R."/>
            <person name="Gojobori T."/>
            <person name="Green R.E."/>
            <person name="Gustincich S."/>
            <person name="Harbers M."/>
            <person name="Hayashi Y."/>
            <person name="Hensch T.K."/>
            <person name="Hirokawa N."/>
            <person name="Hill D."/>
            <person name="Huminiecki L."/>
            <person name="Iacono M."/>
            <person name="Ikeo K."/>
            <person name="Iwama A."/>
            <person name="Ishikawa T."/>
            <person name="Jakt M."/>
            <person name="Kanapin A."/>
            <person name="Katoh M."/>
            <person name="Kawasawa Y."/>
            <person name="Kelso J."/>
            <person name="Kitamura H."/>
            <person name="Kitano H."/>
            <person name="Kollias G."/>
            <person name="Krishnan S.P."/>
            <person name="Kruger A."/>
            <person name="Kummerfeld S.K."/>
            <person name="Kurochkin I.V."/>
            <person name="Lareau L.F."/>
            <person name="Lazarevic D."/>
            <person name="Lipovich L."/>
            <person name="Liu J."/>
            <person name="Liuni S."/>
            <person name="McWilliam S."/>
            <person name="Madan Babu M."/>
            <person name="Madera M."/>
            <person name="Marchionni L."/>
            <person name="Matsuda H."/>
            <person name="Matsuzawa S."/>
            <person name="Miki H."/>
            <person name="Mignone F."/>
            <person name="Miyake S."/>
            <person name="Morris K."/>
            <person name="Mottagui-Tabar S."/>
            <person name="Mulder N."/>
            <person name="Nakano N."/>
            <person name="Nakauchi H."/>
            <person name="Ng P."/>
            <person name="Nilsson R."/>
            <person name="Nishiguchi S."/>
            <person name="Nishikawa S."/>
            <person name="Nori F."/>
            <person name="Ohara O."/>
            <person name="Okazaki Y."/>
            <person name="Orlando V."/>
            <person name="Pang K.C."/>
            <person name="Pavan W.J."/>
            <person name="Pavesi G."/>
            <person name="Pesole G."/>
            <person name="Petrovsky N."/>
            <person name="Piazza S."/>
            <person name="Reed J."/>
            <person name="Reid J.F."/>
            <person name="Ring B.Z."/>
            <person name="Ringwald M."/>
            <person name="Rost B."/>
            <person name="Ruan Y."/>
            <person name="Salzberg S.L."/>
            <person name="Sandelin A."/>
            <person name="Schneider C."/>
            <person name="Schoenbach C."/>
            <person name="Sekiguchi K."/>
            <person name="Semple C.A."/>
            <person name="Seno S."/>
            <person name="Sessa L."/>
            <person name="Sheng Y."/>
            <person name="Shibata Y."/>
            <person name="Shimada H."/>
            <person name="Shimada K."/>
            <person name="Silva D."/>
            <person name="Sinclair B."/>
            <person name="Sperling S."/>
            <person name="Stupka E."/>
            <person name="Sugiura K."/>
            <person name="Sultana R."/>
            <person name="Takenaka Y."/>
            <person name="Taki K."/>
            <person name="Tammoja K."/>
            <person name="Tan S.L."/>
            <person name="Tang S."/>
            <person name="Taylor M.S."/>
            <person name="Tegner J."/>
            <person name="Teichmann S.A."/>
            <person name="Ueda H.R."/>
            <person name="van Nimwegen E."/>
            <person name="Verardo R."/>
            <person name="Wei C.L."/>
            <person name="Yagi K."/>
            <person name="Yamanishi H."/>
            <person name="Zabarovsky E."/>
            <person name="Zhu S."/>
            <person name="Zimmer A."/>
            <person name="Hide W."/>
            <person name="Bult C."/>
            <person name="Grimmond S.M."/>
            <person name="Teasdale R.D."/>
            <person name="Liu E.T."/>
            <person name="Brusic V."/>
            <person name="Quackenbush J."/>
            <person name="Wahlestedt C."/>
            <person name="Mattick J.S."/>
            <person name="Hume D.A."/>
            <person name="Kai C."/>
            <person name="Sasaki D."/>
            <person name="Tomaru Y."/>
            <person name="Fukuda S."/>
            <person name="Kanamori-Katayama M."/>
            <person name="Suzuki M."/>
            <person name="Aoki J."/>
            <person name="Arakawa T."/>
            <person name="Iida J."/>
            <person name="Imamura K."/>
            <person name="Itoh M."/>
            <person name="Kato T."/>
            <person name="Kawaji H."/>
            <person name="Kawagashira N."/>
            <person name="Kawashima T."/>
            <person name="Kojima M."/>
            <person name="Kondo S."/>
            <person name="Konno H."/>
            <person name="Nakano K."/>
            <person name="Ninomiya N."/>
            <person name="Nishio T."/>
            <person name="Okada M."/>
            <person name="Plessy C."/>
            <person name="Shibata K."/>
            <person name="Shiraki T."/>
            <person name="Suzuki S."/>
            <person name="Tagami M."/>
            <person name="Waki K."/>
            <person name="Watahiki A."/>
            <person name="Okamura-Oho Y."/>
            <person name="Suzuki H."/>
            <person name="Kawai J."/>
            <person name="Hayashizaki Y."/>
        </authorList>
    </citation>
    <scope>NUCLEOTIDE SEQUENCE [LARGE SCALE MRNA] OF 1-605 (ISOFORM 1)</scope>
    <source>
        <strain>C57BL/6J</strain>
        <tissue>Eye</tissue>
    </source>
</reference>
<reference key="6">
    <citation type="journal article" date="2004" name="Genome Res.">
        <title>The status, quality, and expansion of the NIH full-length cDNA project: the Mammalian Gene Collection (MGC).</title>
        <authorList>
            <consortium name="The MGC Project Team"/>
        </authorList>
    </citation>
    <scope>NUCLEOTIDE SEQUENCE [LARGE SCALE MRNA] OF 139-1684 (ISOFORMS 1/2)</scope>
    <source>
        <strain>FVB/N</strain>
        <tissue>Mammary tumor</tissue>
    </source>
</reference>
<reference key="7">
    <citation type="journal article" date="2004" name="Mol. Cell. Proteomics">
        <title>Phosphoproteomic analysis of the developing mouse brain.</title>
        <authorList>
            <person name="Ballif B.A."/>
            <person name="Villen J."/>
            <person name="Beausoleil S.A."/>
            <person name="Schwartz D."/>
            <person name="Gygi S.P."/>
        </authorList>
    </citation>
    <scope>IDENTIFICATION BY MASS SPECTROMETRY [LARGE SCALE ANALYSIS]</scope>
    <source>
        <tissue>Embryonic brain</tissue>
    </source>
</reference>
<reference key="8">
    <citation type="journal article" date="2006" name="Mol. Cell. Proteomics">
        <title>Comprehensive identification of phosphorylation sites in postsynaptic density preparations.</title>
        <authorList>
            <person name="Trinidad J.C."/>
            <person name="Specht C.G."/>
            <person name="Thalhammer A."/>
            <person name="Schoepfer R."/>
            <person name="Burlingame A.L."/>
        </authorList>
    </citation>
    <scope>PHOSPHORYLATION [LARGE SCALE ANALYSIS] AT SER-467</scope>
    <scope>IDENTIFICATION BY MASS SPECTROMETRY [LARGE SCALE ANALYSIS]</scope>
    <source>
        <tissue>Brain</tissue>
    </source>
</reference>
<reference key="9">
    <citation type="journal article" date="2007" name="J. Proteome Res.">
        <title>A differential phosphoproteomic analysis of retinoic acid-treated P19 cells.</title>
        <authorList>
            <person name="Smith J.C."/>
            <person name="Duchesne M.A."/>
            <person name="Tozzi P."/>
            <person name="Ethier M."/>
            <person name="Figeys D."/>
        </authorList>
    </citation>
    <scope>PHOSPHORYLATION [LARGE SCALE ANALYSIS] AT SER-682; SER-683 AND SER-684</scope>
    <scope>IDENTIFICATION BY MASS SPECTROMETRY [LARGE SCALE ANALYSIS]</scope>
    <source>
        <tissue>Teratocarcinoma</tissue>
    </source>
</reference>
<reference key="10">
    <citation type="journal article" date="2009" name="Mol. Cell. Proteomics">
        <title>Large scale localization of protein phosphorylation by use of electron capture dissociation mass spectrometry.</title>
        <authorList>
            <person name="Sweet S.M."/>
            <person name="Bailey C.M."/>
            <person name="Cunningham D.L."/>
            <person name="Heath J.K."/>
            <person name="Cooper H.J."/>
        </authorList>
    </citation>
    <scope>PHOSPHORYLATION [LARGE SCALE ANALYSIS] AT TYR-353</scope>
    <scope>IDENTIFICATION BY MASS SPECTROMETRY [LARGE SCALE ANALYSIS]</scope>
    <source>
        <tissue>Embryonic fibroblast</tissue>
    </source>
</reference>
<reference key="11">
    <citation type="journal article" date="2010" name="Cell">
        <title>A tissue-specific atlas of mouse protein phosphorylation and expression.</title>
        <authorList>
            <person name="Huttlin E.L."/>
            <person name="Jedrychowski M.P."/>
            <person name="Elias J.E."/>
            <person name="Goswami T."/>
            <person name="Rad R."/>
            <person name="Beausoleil S.A."/>
            <person name="Villen J."/>
            <person name="Haas W."/>
            <person name="Sowa M.E."/>
            <person name="Gygi S.P."/>
        </authorList>
    </citation>
    <scope>PHOSPHORYLATION [LARGE SCALE ANALYSIS] AT SER-18; SER-22; SER-27; SER-234; SER-270; SER-273; SER-350; SER-371; SER-467; SER-489; SER-584; SER-631; SER-634; SER-637; SER-682; SER-733; SER-767; SER-786; THR-871; SER-873; SER-1351 AND SER-1645</scope>
    <scope>IDENTIFICATION BY MASS SPECTROMETRY [LARGE SCALE ANALYSIS]</scope>
    <source>
        <tissue>Brain</tissue>
        <tissue>Brown adipose tissue</tissue>
        <tissue>Heart</tissue>
        <tissue>Kidney</tissue>
        <tissue>Liver</tissue>
        <tissue>Lung</tissue>
        <tissue>Pancreas</tissue>
        <tissue>Spleen</tissue>
        <tissue>Testis</tissue>
    </source>
</reference>
<dbReference type="EMBL" id="AF326228">
    <property type="protein sequence ID" value="AAK16150.1"/>
    <property type="molecule type" value="mRNA"/>
</dbReference>
<dbReference type="EMBL" id="AF326230">
    <property type="protein sequence ID" value="AAK16152.1"/>
    <property type="molecule type" value="mRNA"/>
</dbReference>
<dbReference type="EMBL" id="AB020886">
    <property type="protein sequence ID" value="BAA76894.1"/>
    <property type="molecule type" value="mRNA"/>
</dbReference>
<dbReference type="EMBL" id="AB025278">
    <property type="protein sequence ID" value="BAC66465.1"/>
    <property type="status" value="ALT_FRAME"/>
    <property type="molecule type" value="mRNA"/>
</dbReference>
<dbReference type="EMBL" id="AB051563">
    <property type="protein sequence ID" value="BAB72161.1"/>
    <property type="molecule type" value="mRNA"/>
</dbReference>
<dbReference type="EMBL" id="AB070852">
    <property type="protein sequence ID" value="BAB72164.1"/>
    <property type="molecule type" value="mRNA"/>
</dbReference>
<dbReference type="EMBL" id="AB070853">
    <property type="protein sequence ID" value="BAB72165.1"/>
    <property type="molecule type" value="mRNA"/>
</dbReference>
<dbReference type="EMBL" id="AK053844">
    <property type="protein sequence ID" value="BAC35553.1"/>
    <property type="molecule type" value="mRNA"/>
</dbReference>
<dbReference type="EMBL" id="BC042461">
    <property type="protein sequence ID" value="AAH42461.1"/>
    <property type="molecule type" value="mRNA"/>
</dbReference>
<dbReference type="EMBL" id="BC043939">
    <property type="protein sequence ID" value="AAH43939.1"/>
    <property type="molecule type" value="mRNA"/>
</dbReference>
<dbReference type="CCDS" id="CCDS56673.1">
    <molecule id="Q9WTQ5-1"/>
</dbReference>
<dbReference type="RefSeq" id="NP_112462.1">
    <molecule id="Q9WTQ5-1"/>
    <property type="nucleotide sequence ID" value="NM_031185.3"/>
</dbReference>
<dbReference type="BioGRID" id="219914">
    <property type="interactions" value="16"/>
</dbReference>
<dbReference type="CORUM" id="Q9WTQ5"/>
<dbReference type="ELM" id="Q9WTQ5"/>
<dbReference type="FunCoup" id="Q9WTQ5">
    <property type="interactions" value="272"/>
</dbReference>
<dbReference type="IntAct" id="Q9WTQ5">
    <property type="interactions" value="11"/>
</dbReference>
<dbReference type="STRING" id="10090.ENSMUSP00000035829"/>
<dbReference type="GlyGen" id="Q9WTQ5">
    <property type="glycosylation" value="3 sites, 1 O-linked glycan (2 sites)"/>
</dbReference>
<dbReference type="iPTMnet" id="Q9WTQ5"/>
<dbReference type="PhosphoSitePlus" id="Q9WTQ5"/>
<dbReference type="SwissPalm" id="Q9WTQ5"/>
<dbReference type="CPTAC" id="non-CPTAC-3631"/>
<dbReference type="jPOST" id="Q9WTQ5"/>
<dbReference type="PaxDb" id="10090-ENSMUSP00000035829"/>
<dbReference type="PeptideAtlas" id="Q9WTQ5"/>
<dbReference type="ProteomicsDB" id="285794">
    <molecule id="Q9WTQ5-1"/>
</dbReference>
<dbReference type="ProteomicsDB" id="285795">
    <molecule id="Q9WTQ5-2"/>
</dbReference>
<dbReference type="Pumba" id="Q9WTQ5"/>
<dbReference type="Antibodypedia" id="1199">
    <property type="antibodies" value="236 antibodies from 37 providers"/>
</dbReference>
<dbReference type="DNASU" id="83397"/>
<dbReference type="Ensembl" id="ENSMUST00000045730.7">
    <molecule id="Q9WTQ5-1"/>
    <property type="protein sequence ID" value="ENSMUSP00000035829.6"/>
    <property type="gene ID" value="ENSMUSG00000038587.11"/>
</dbReference>
<dbReference type="Ensembl" id="ENSMUST00000215696.2">
    <molecule id="Q9WTQ5-2"/>
    <property type="protein sequence ID" value="ENSMUSP00000150261.2"/>
    <property type="gene ID" value="ENSMUSG00000038587.11"/>
</dbReference>
<dbReference type="GeneID" id="83397"/>
<dbReference type="KEGG" id="mmu:83397"/>
<dbReference type="UCSC" id="uc007ehh.1">
    <molecule id="Q9WTQ5-1"/>
    <property type="organism name" value="mouse"/>
</dbReference>
<dbReference type="AGR" id="MGI:1932576"/>
<dbReference type="CTD" id="9590"/>
<dbReference type="MGI" id="MGI:1932576">
    <property type="gene designation" value="Akap12"/>
</dbReference>
<dbReference type="VEuPathDB" id="HostDB:ENSMUSG00000038587"/>
<dbReference type="eggNOG" id="ENOG502RDV6">
    <property type="taxonomic scope" value="Eukaryota"/>
</dbReference>
<dbReference type="GeneTree" id="ENSGT00730000111244"/>
<dbReference type="HOGENOM" id="CLU_002691_0_0_1"/>
<dbReference type="InParanoid" id="Q9WTQ5"/>
<dbReference type="OMA" id="SFTEPAW"/>
<dbReference type="OrthoDB" id="8931760at2759"/>
<dbReference type="PhylomeDB" id="Q9WTQ5"/>
<dbReference type="TreeFam" id="TF105411"/>
<dbReference type="Reactome" id="R-MMU-9013405">
    <property type="pathway name" value="RHOD GTPase cycle"/>
</dbReference>
<dbReference type="Reactome" id="R-MMU-9035034">
    <property type="pathway name" value="RHOF GTPase cycle"/>
</dbReference>
<dbReference type="BioGRID-ORCS" id="83397">
    <property type="hits" value="2 hits in 77 CRISPR screens"/>
</dbReference>
<dbReference type="ChiTaRS" id="Akap12">
    <property type="organism name" value="mouse"/>
</dbReference>
<dbReference type="PRO" id="PR:Q9WTQ5"/>
<dbReference type="Proteomes" id="UP000000589">
    <property type="component" value="Chromosome 10"/>
</dbReference>
<dbReference type="RNAct" id="Q9WTQ5">
    <property type="molecule type" value="protein"/>
</dbReference>
<dbReference type="Bgee" id="ENSMUSG00000038587">
    <property type="expression patterns" value="Expressed in efferent duct and 245 other cell types or tissues"/>
</dbReference>
<dbReference type="ExpressionAtlas" id="Q9WTQ5">
    <property type="expression patterns" value="baseline and differential"/>
</dbReference>
<dbReference type="GO" id="GO:0005856">
    <property type="term" value="C:cytoskeleton"/>
    <property type="evidence" value="ECO:0007669"/>
    <property type="project" value="UniProtKB-SubCell"/>
</dbReference>
<dbReference type="GO" id="GO:0005829">
    <property type="term" value="C:cytosol"/>
    <property type="evidence" value="ECO:0007669"/>
    <property type="project" value="Ensembl"/>
</dbReference>
<dbReference type="GO" id="GO:0043025">
    <property type="term" value="C:neuronal cell body"/>
    <property type="evidence" value="ECO:0007669"/>
    <property type="project" value="Ensembl"/>
</dbReference>
<dbReference type="GO" id="GO:0005886">
    <property type="term" value="C:plasma membrane"/>
    <property type="evidence" value="ECO:0007669"/>
    <property type="project" value="Ensembl"/>
</dbReference>
<dbReference type="GO" id="GO:0098685">
    <property type="term" value="C:Schaffer collateral - CA1 synapse"/>
    <property type="evidence" value="ECO:0000314"/>
    <property type="project" value="SynGO"/>
</dbReference>
<dbReference type="GO" id="GO:0008179">
    <property type="term" value="F:adenylate cyclase binding"/>
    <property type="evidence" value="ECO:0007669"/>
    <property type="project" value="Ensembl"/>
</dbReference>
<dbReference type="GO" id="GO:0005516">
    <property type="term" value="F:calmodulin binding"/>
    <property type="evidence" value="ECO:0007669"/>
    <property type="project" value="UniProtKB-KW"/>
</dbReference>
<dbReference type="GO" id="GO:0051018">
    <property type="term" value="F:protein kinase A binding"/>
    <property type="evidence" value="ECO:0007669"/>
    <property type="project" value="InterPro"/>
</dbReference>
<dbReference type="GO" id="GO:0030159">
    <property type="term" value="F:signaling receptor complex adaptor activity"/>
    <property type="evidence" value="ECO:0000304"/>
    <property type="project" value="MGI"/>
</dbReference>
<dbReference type="GO" id="GO:0007193">
    <property type="term" value="P:adenylate cyclase-inhibiting G protein-coupled receptor signaling pathway"/>
    <property type="evidence" value="ECO:0007669"/>
    <property type="project" value="Ensembl"/>
</dbReference>
<dbReference type="GO" id="GO:0071347">
    <property type="term" value="P:cellular response to interleukin-1"/>
    <property type="evidence" value="ECO:0007669"/>
    <property type="project" value="Ensembl"/>
</dbReference>
<dbReference type="GO" id="GO:0071356">
    <property type="term" value="P:cellular response to tumor necrosis factor"/>
    <property type="evidence" value="ECO:0007669"/>
    <property type="project" value="Ensembl"/>
</dbReference>
<dbReference type="GO" id="GO:0035733">
    <property type="term" value="P:hepatic stellate cell activation"/>
    <property type="evidence" value="ECO:0007669"/>
    <property type="project" value="Ensembl"/>
</dbReference>
<dbReference type="GO" id="GO:0050804">
    <property type="term" value="P:modulation of chemical synaptic transmission"/>
    <property type="evidence" value="ECO:0000314"/>
    <property type="project" value="SynGO"/>
</dbReference>
<dbReference type="GO" id="GO:0043116">
    <property type="term" value="P:negative regulation of vascular permeability"/>
    <property type="evidence" value="ECO:0007669"/>
    <property type="project" value="Ensembl"/>
</dbReference>
<dbReference type="GO" id="GO:0070374">
    <property type="term" value="P:positive regulation of ERK1 and ERK2 cascade"/>
    <property type="evidence" value="ECO:0007669"/>
    <property type="project" value="Ensembl"/>
</dbReference>
<dbReference type="GO" id="GO:0061870">
    <property type="term" value="P:positive regulation of hepatic stellate cell migration"/>
    <property type="evidence" value="ECO:0007669"/>
    <property type="project" value="Ensembl"/>
</dbReference>
<dbReference type="GO" id="GO:1900143">
    <property type="term" value="P:positive regulation of oligodendrocyte apoptotic process"/>
    <property type="evidence" value="ECO:0007669"/>
    <property type="project" value="Ensembl"/>
</dbReference>
<dbReference type="GO" id="GO:0010739">
    <property type="term" value="P:positive regulation of protein kinase A signaling"/>
    <property type="evidence" value="ECO:0007669"/>
    <property type="project" value="InterPro"/>
</dbReference>
<dbReference type="GO" id="GO:0032760">
    <property type="term" value="P:positive regulation of tumor necrosis factor production"/>
    <property type="evidence" value="ECO:0007669"/>
    <property type="project" value="Ensembl"/>
</dbReference>
<dbReference type="GO" id="GO:0090036">
    <property type="term" value="P:regulation of protein kinase C signaling"/>
    <property type="evidence" value="ECO:0007669"/>
    <property type="project" value="InterPro"/>
</dbReference>
<dbReference type="GO" id="GO:0051602">
    <property type="term" value="P:response to electrical stimulus"/>
    <property type="evidence" value="ECO:0007669"/>
    <property type="project" value="Ensembl"/>
</dbReference>
<dbReference type="GO" id="GO:0032496">
    <property type="term" value="P:response to lipopolysaccharide"/>
    <property type="evidence" value="ECO:0007669"/>
    <property type="project" value="Ensembl"/>
</dbReference>
<dbReference type="GO" id="GO:0007165">
    <property type="term" value="P:signal transduction"/>
    <property type="evidence" value="ECO:0000304"/>
    <property type="project" value="MGI"/>
</dbReference>
<dbReference type="InterPro" id="IPR028540">
    <property type="entry name" value="AKAP12"/>
</dbReference>
<dbReference type="InterPro" id="IPR001573">
    <property type="entry name" value="AKAP_WSK"/>
</dbReference>
<dbReference type="InterPro" id="IPR018459">
    <property type="entry name" value="RII-bd_1"/>
</dbReference>
<dbReference type="PANTHER" id="PTHR23209">
    <property type="entry name" value="A-KINASE ANCHOR PROTEIN 12"/>
    <property type="match status" value="1"/>
</dbReference>
<dbReference type="PANTHER" id="PTHR23209:SF4">
    <property type="entry name" value="A-KINASE ANCHOR PROTEIN 12"/>
    <property type="match status" value="1"/>
</dbReference>
<dbReference type="Pfam" id="PF10522">
    <property type="entry name" value="RII_binding_1"/>
    <property type="match status" value="1"/>
</dbReference>
<dbReference type="Pfam" id="PF03832">
    <property type="entry name" value="WSK"/>
    <property type="match status" value="3"/>
</dbReference>
<dbReference type="PROSITE" id="PS51893">
    <property type="entry name" value="AKAP_CAM_BD"/>
    <property type="match status" value="3"/>
</dbReference>
<organism>
    <name type="scientific">Mus musculus</name>
    <name type="common">Mouse</name>
    <dbReference type="NCBI Taxonomy" id="10090"/>
    <lineage>
        <taxon>Eukaryota</taxon>
        <taxon>Metazoa</taxon>
        <taxon>Chordata</taxon>
        <taxon>Craniata</taxon>
        <taxon>Vertebrata</taxon>
        <taxon>Euteleostomi</taxon>
        <taxon>Mammalia</taxon>
        <taxon>Eutheria</taxon>
        <taxon>Euarchontoglires</taxon>
        <taxon>Glires</taxon>
        <taxon>Rodentia</taxon>
        <taxon>Myomorpha</taxon>
        <taxon>Muroidea</taxon>
        <taxon>Muridae</taxon>
        <taxon>Murinae</taxon>
        <taxon>Mus</taxon>
        <taxon>Mus</taxon>
    </lineage>
</organism>
<keyword id="KW-0025">Alternative splicing</keyword>
<keyword id="KW-0112">Calmodulin-binding</keyword>
<keyword id="KW-0963">Cytoplasm</keyword>
<keyword id="KW-0206">Cytoskeleton</keyword>
<keyword id="KW-1017">Isopeptide bond</keyword>
<keyword id="KW-0449">Lipoprotein</keyword>
<keyword id="KW-0472">Membrane</keyword>
<keyword id="KW-0519">Myristate</keyword>
<keyword id="KW-0597">Phosphoprotein</keyword>
<keyword id="KW-1185">Reference proteome</keyword>
<keyword id="KW-0677">Repeat</keyword>
<keyword id="KW-0832">Ubl conjugation</keyword>
<gene>
    <name type="primary">Akap12</name>
    <name type="synonym">Gag12</name>
    <name type="synonym">Ssecks</name>
</gene>
<proteinExistence type="evidence at protein level"/>
<comment type="function">
    <text evidence="1">Anchoring protein that mediates the subcellular compartmentation of protein kinase A (PKA) and protein kinase C (PKC).</text>
</comment>
<comment type="subunit">
    <text evidence="1">Binds to dimeric RII-alpha regulatory subunit of PKC.</text>
</comment>
<comment type="subcellular location">
    <subcellularLocation>
        <location evidence="1">Cytoplasm</location>
        <location evidence="1">Cytoskeleton</location>
    </subcellularLocation>
    <subcellularLocation>
        <location evidence="2">Membrane</location>
        <topology evidence="2">Lipid-anchor</topology>
    </subcellularLocation>
</comment>
<comment type="alternative products">
    <event type="alternative splicing"/>
    <isoform>
        <id>Q9WTQ5-1</id>
        <name>1</name>
        <name>Alpha</name>
        <sequence type="displayed"/>
    </isoform>
    <isoform>
        <id>Q9WTQ5-2</id>
        <name>2</name>
        <name>Gamma</name>
        <sequence type="described" ref="VSP_028135"/>
    </isoform>
</comment>
<comment type="tissue specificity">
    <text evidence="6">Isoform 1 is predominantly found in the nervous system. Isoform 3 is testis specific.</text>
</comment>
<comment type="sequence caution" evidence="9">
    <conflict type="frameshift">
        <sequence resource="EMBL-CDS" id="BAC66465"/>
    </conflict>
</comment>
<feature type="initiator methionine" description="Removed" evidence="2">
    <location>
        <position position="1"/>
    </location>
</feature>
<feature type="chain" id="PRO_0000304941" description="A-kinase anchor protein 12">
    <location>
        <begin position="2"/>
        <end position="1684"/>
    </location>
</feature>
<feature type="region of interest" description="Disordered" evidence="5">
    <location>
        <begin position="1"/>
        <end position="124"/>
    </location>
</feature>
<feature type="region of interest" description="Disordered" evidence="5">
    <location>
        <begin position="175"/>
        <end position="281"/>
    </location>
</feature>
<feature type="region of interest" description="Involved in PKC-binding" evidence="1">
    <location>
        <begin position="253"/>
        <end position="543"/>
    </location>
</feature>
<feature type="region of interest" description="Disordered" evidence="5">
    <location>
        <begin position="296"/>
        <end position="353"/>
    </location>
</feature>
<feature type="region of interest" description="Disordered" evidence="5">
    <location>
        <begin position="421"/>
        <end position="479"/>
    </location>
</feature>
<feature type="region of interest" description="Disordered" evidence="5">
    <location>
        <begin position="492"/>
        <end position="825"/>
    </location>
</feature>
<feature type="region of interest" description="Disordered" evidence="5">
    <location>
        <begin position="970"/>
        <end position="1001"/>
    </location>
</feature>
<feature type="region of interest" description="Disordered" evidence="5">
    <location>
        <begin position="1055"/>
        <end position="1106"/>
    </location>
</feature>
<feature type="region of interest" description="Disordered" evidence="5">
    <location>
        <begin position="1121"/>
        <end position="1211"/>
    </location>
</feature>
<feature type="region of interest" description="Disordered" evidence="5">
    <location>
        <begin position="1232"/>
        <end position="1365"/>
    </location>
</feature>
<feature type="region of interest" description="Disordered" evidence="5">
    <location>
        <begin position="1391"/>
        <end position="1492"/>
    </location>
</feature>
<feature type="region of interest" description="RII-binding" evidence="1">
    <location>
        <begin position="1501"/>
        <end position="1514"/>
    </location>
</feature>
<feature type="region of interest" description="Disordered" evidence="5">
    <location>
        <begin position="1568"/>
        <end position="1684"/>
    </location>
</feature>
<feature type="short sequence motif" description="AKAP CaM-binding 1" evidence="4">
    <location>
        <begin position="593"/>
        <end position="613"/>
    </location>
</feature>
<feature type="short sequence motif" description="AKAP CaM-binding 2" evidence="4">
    <location>
        <begin position="740"/>
        <end position="760"/>
    </location>
</feature>
<feature type="short sequence motif" description="AKAP CaM-binding 3" evidence="4">
    <location>
        <begin position="781"/>
        <end position="801"/>
    </location>
</feature>
<feature type="compositionally biased region" description="Low complexity" evidence="5">
    <location>
        <begin position="30"/>
        <end position="48"/>
    </location>
</feature>
<feature type="compositionally biased region" description="Acidic residues" evidence="5">
    <location>
        <begin position="75"/>
        <end position="86"/>
    </location>
</feature>
<feature type="compositionally biased region" description="Basic and acidic residues" evidence="5">
    <location>
        <begin position="89"/>
        <end position="105"/>
    </location>
</feature>
<feature type="compositionally biased region" description="Basic and acidic residues" evidence="5">
    <location>
        <begin position="212"/>
        <end position="227"/>
    </location>
</feature>
<feature type="compositionally biased region" description="Polar residues" evidence="5">
    <location>
        <begin position="228"/>
        <end position="247"/>
    </location>
</feature>
<feature type="compositionally biased region" description="Basic and acidic residues" evidence="5">
    <location>
        <begin position="251"/>
        <end position="266"/>
    </location>
</feature>
<feature type="compositionally biased region" description="Polar residues" evidence="5">
    <location>
        <begin position="270"/>
        <end position="281"/>
    </location>
</feature>
<feature type="compositionally biased region" description="Basic and acidic residues" evidence="5">
    <location>
        <begin position="302"/>
        <end position="320"/>
    </location>
</feature>
<feature type="compositionally biased region" description="Acidic residues" evidence="5">
    <location>
        <begin position="321"/>
        <end position="342"/>
    </location>
</feature>
<feature type="compositionally biased region" description="Basic and acidic residues" evidence="5">
    <location>
        <begin position="468"/>
        <end position="478"/>
    </location>
</feature>
<feature type="compositionally biased region" description="Low complexity" evidence="5">
    <location>
        <begin position="497"/>
        <end position="511"/>
    </location>
</feature>
<feature type="compositionally biased region" description="Basic residues" evidence="5">
    <location>
        <begin position="512"/>
        <end position="521"/>
    </location>
</feature>
<feature type="compositionally biased region" description="Basic and acidic residues" evidence="5">
    <location>
        <begin position="611"/>
        <end position="625"/>
    </location>
</feature>
<feature type="compositionally biased region" description="Low complexity" evidence="5">
    <location>
        <begin position="626"/>
        <end position="637"/>
    </location>
</feature>
<feature type="compositionally biased region" description="Basic and acidic residues" evidence="5">
    <location>
        <begin position="641"/>
        <end position="660"/>
    </location>
</feature>
<feature type="compositionally biased region" description="Basic and acidic residues" evidence="5">
    <location>
        <begin position="696"/>
        <end position="710"/>
    </location>
</feature>
<feature type="compositionally biased region" description="Polar residues" evidence="5">
    <location>
        <begin position="714"/>
        <end position="723"/>
    </location>
</feature>
<feature type="compositionally biased region" description="Low complexity" evidence="5">
    <location>
        <begin position="724"/>
        <end position="741"/>
    </location>
</feature>
<feature type="compositionally biased region" description="Polar residues" evidence="5">
    <location>
        <begin position="980"/>
        <end position="992"/>
    </location>
</feature>
<feature type="compositionally biased region" description="Polar residues" evidence="5">
    <location>
        <begin position="1130"/>
        <end position="1176"/>
    </location>
</feature>
<feature type="compositionally biased region" description="Basic and acidic residues" evidence="5">
    <location>
        <begin position="1198"/>
        <end position="1210"/>
    </location>
</feature>
<feature type="compositionally biased region" description="Basic and acidic residues" evidence="5">
    <location>
        <begin position="1239"/>
        <end position="1254"/>
    </location>
</feature>
<feature type="compositionally biased region" description="Basic and acidic residues" evidence="5">
    <location>
        <begin position="1293"/>
        <end position="1331"/>
    </location>
</feature>
<feature type="compositionally biased region" description="Basic and acidic residues" evidence="5">
    <location>
        <begin position="1467"/>
        <end position="1492"/>
    </location>
</feature>
<feature type="compositionally biased region" description="Basic and acidic residues" evidence="5">
    <location>
        <begin position="1653"/>
        <end position="1684"/>
    </location>
</feature>
<feature type="modified residue" description="Phosphoserine" evidence="3">
    <location>
        <position position="11"/>
    </location>
</feature>
<feature type="modified residue" description="Phosphoserine" evidence="13">
    <location>
        <position position="18"/>
    </location>
</feature>
<feature type="modified residue" description="Phosphoserine" evidence="13">
    <location>
        <position position="22"/>
    </location>
</feature>
<feature type="modified residue" description="Phosphoserine" evidence="13">
    <location>
        <position position="27"/>
    </location>
</feature>
<feature type="modified residue" description="Phosphoserine" evidence="2">
    <location>
        <position position="136"/>
    </location>
</feature>
<feature type="modified residue" description="Phosphoserine" evidence="13">
    <location>
        <position position="234"/>
    </location>
</feature>
<feature type="modified residue" description="Phosphoserine" evidence="3">
    <location>
        <position position="244"/>
    </location>
</feature>
<feature type="modified residue" description="Phosphoserine" evidence="13">
    <location>
        <position position="270"/>
    </location>
</feature>
<feature type="modified residue" description="Phosphoserine" evidence="13">
    <location>
        <position position="273"/>
    </location>
</feature>
<feature type="modified residue" description="Phosphothreonine" evidence="3">
    <location>
        <position position="330"/>
    </location>
</feature>
<feature type="modified residue" description="Phosphoserine" evidence="13">
    <location>
        <position position="350"/>
    </location>
</feature>
<feature type="modified residue" description="Phosphotyrosine" evidence="12">
    <location>
        <position position="353"/>
    </location>
</feature>
<feature type="modified residue" description="Phosphoserine" evidence="13">
    <location>
        <position position="371"/>
    </location>
</feature>
<feature type="modified residue" description="Phosphoserine" evidence="10 13">
    <location>
        <position position="467"/>
    </location>
</feature>
<feature type="modified residue" description="Phosphoserine" evidence="13">
    <location>
        <position position="489"/>
    </location>
</feature>
<feature type="modified residue" description="Phosphoserine" evidence="3">
    <location>
        <position position="505"/>
    </location>
</feature>
<feature type="modified residue" description="Phosphoserine" evidence="3">
    <location>
        <position position="507"/>
    </location>
</feature>
<feature type="modified residue" description="Phosphoserine" evidence="3">
    <location>
        <position position="540"/>
    </location>
</feature>
<feature type="modified residue" description="Phosphoserine" evidence="2">
    <location>
        <position position="543"/>
    </location>
</feature>
<feature type="modified residue" description="Phosphoserine" evidence="13">
    <location>
        <position position="584"/>
    </location>
</feature>
<feature type="modified residue" description="Phosphoserine" evidence="2">
    <location>
        <position position="598"/>
    </location>
</feature>
<feature type="modified residue" description="Phosphoserine" evidence="2">
    <location>
        <position position="613"/>
    </location>
</feature>
<feature type="modified residue" description="Phosphoserine" evidence="2">
    <location>
        <position position="615"/>
    </location>
</feature>
<feature type="modified residue" description="Phosphothreonine" evidence="3">
    <location>
        <position position="628"/>
    </location>
</feature>
<feature type="modified residue" description="Phosphoserine" evidence="3">
    <location>
        <position position="630"/>
    </location>
</feature>
<feature type="modified residue" description="Phosphoserine" evidence="13">
    <location>
        <position position="631"/>
    </location>
</feature>
<feature type="modified residue" description="Phosphoserine" evidence="13">
    <location>
        <position position="634"/>
    </location>
</feature>
<feature type="modified residue" description="Phosphoserine" evidence="13">
    <location>
        <position position="637"/>
    </location>
</feature>
<feature type="modified residue" description="Phosphoserine" evidence="11 13">
    <location>
        <position position="682"/>
    </location>
</feature>
<feature type="modified residue" description="Phosphoserine" evidence="11">
    <location>
        <position position="683"/>
    </location>
</feature>
<feature type="modified residue" description="Phosphoserine" evidence="11">
    <location>
        <position position="684"/>
    </location>
</feature>
<feature type="modified residue" description="Phosphoserine" evidence="13">
    <location>
        <position position="733"/>
    </location>
</feature>
<feature type="modified residue" description="Phosphoserine" evidence="2">
    <location>
        <position position="745"/>
    </location>
</feature>
<feature type="modified residue" description="Phosphoserine" evidence="13">
    <location>
        <position position="767"/>
    </location>
</feature>
<feature type="modified residue" description="Phosphoserine" evidence="13">
    <location>
        <position position="786"/>
    </location>
</feature>
<feature type="modified residue" description="Phosphothreonine" evidence="13">
    <location>
        <position position="871"/>
    </location>
</feature>
<feature type="modified residue" description="Phosphoserine" evidence="13">
    <location>
        <position position="873"/>
    </location>
</feature>
<feature type="modified residue" description="Phosphoserine" evidence="3">
    <location>
        <position position="1059"/>
    </location>
</feature>
<feature type="modified residue" description="Phosphoserine" evidence="2">
    <location>
        <position position="1292"/>
    </location>
</feature>
<feature type="modified residue" description="Phosphoserine" evidence="13">
    <location>
        <position position="1351"/>
    </location>
</feature>
<feature type="modified residue" description="Phosphoserine" evidence="2">
    <location>
        <position position="1355"/>
    </location>
</feature>
<feature type="modified residue" description="Phosphoserine" evidence="3">
    <location>
        <position position="1357"/>
    </location>
</feature>
<feature type="modified residue" description="Phosphoserine" evidence="2">
    <location>
        <position position="1546"/>
    </location>
</feature>
<feature type="modified residue" description="Phosphoserine" evidence="13">
    <location>
        <position position="1645"/>
    </location>
</feature>
<feature type="lipid moiety-binding region" description="N-myristoyl glycine" evidence="2">
    <location>
        <position position="2"/>
    </location>
</feature>
<feature type="cross-link" description="Glycyl lysine isopeptide (Lys-Gly) (interchain with G-Cter in SUMO1)" evidence="2">
    <location>
        <position position="1030"/>
    </location>
</feature>
<feature type="splice variant" id="VSP_028135" description="In isoform 2." evidence="7 8">
    <location>
        <begin position="1"/>
        <end position="105"/>
    </location>
</feature>
<evidence type="ECO:0000250" key="1"/>
<evidence type="ECO:0000250" key="2">
    <source>
        <dbReference type="UniProtKB" id="Q02952"/>
    </source>
</evidence>
<evidence type="ECO:0000250" key="3">
    <source>
        <dbReference type="UniProtKB" id="Q5QD51"/>
    </source>
</evidence>
<evidence type="ECO:0000255" key="4">
    <source>
        <dbReference type="PROSITE-ProRule" id="PRU01241"/>
    </source>
</evidence>
<evidence type="ECO:0000256" key="5">
    <source>
        <dbReference type="SAM" id="MobiDB-lite"/>
    </source>
</evidence>
<evidence type="ECO:0000269" key="6">
    <source>
    </source>
</evidence>
<evidence type="ECO:0000303" key="7">
    <source>
    </source>
</evidence>
<evidence type="ECO:0000303" key="8">
    <source ref="4"/>
</evidence>
<evidence type="ECO:0000305" key="9"/>
<evidence type="ECO:0007744" key="10">
    <source>
    </source>
</evidence>
<evidence type="ECO:0007744" key="11">
    <source>
    </source>
</evidence>
<evidence type="ECO:0007744" key="12">
    <source>
    </source>
</evidence>
<evidence type="ECO:0007744" key="13">
    <source>
    </source>
</evidence>
<accession>Q9WTQ5</accession>
<accession>Q80SS4</accession>
<accession>Q810D4</accession>
<accession>Q8BPK4</accession>
<accession>Q99MP1</accession>
<sequence>MGAGSSTEQRSPEQPAESDTPSELELSGHGPAAEASGAAGDPADADPATKLPQKNGQLSAVNGVAEQEDVHVQEESQDGQEEEVTVEDVGQRESEDVKEKDRAKEMAASSTVVEDITKDEQEETPEIIEQIPASESNVEEMAQAAESQANDVGFKKVFKFVGFKFTVKKDKNEKSDTVQLLTVKKDEGEGAEASVGAGDHQEPGVETVGESASKESELKQSTEKQEGTLKQAQSSTEIPLQAESGQGTEEEAAKDGEENREKEPTKPLESPTSPVSNETTSSFKKFFTHGWAGWRKKTSFKKPKEDDLETSEKRKEQEAEKVDEEEGEKTEPAPAEEQEPAEGTDQARLSADYEKVELPLEDQVGDLEALSEKCAPLATEVFDEKTEAHQEVVAEVHVSTVEKMTKGQGGAEVEGDVVVEGSGESLPPEKLAETQEVPQEAEPVEELMKTKEVCVSGGDHTQLTDLSPEEKMLPKHPEGIVSEVEMLSSQERIKVQGSPLKKLFSSSGLKKLSGKKQKGKRGGGGGDEEPGEYQHIQTESPESADEQKGESSASSPEEPEEIACLEKGPSEAPQEAEAEEGATSDGEKKREGITPWASFKKMVTPKKRVRRPSESDKEEELDKVKSATLSSTESTASGMQDEVRAVGEEQRSEEPKRRVDTSVSWEALICVGSSKKRARKASSSDDEGGPRTLGGDGHRAEEASKDKEADALPASTQEQDQAHGSSSPEPAGSPSEGEGVSTWESFKRLVTPRKKSKSKLEERAEDSGAEQLASEIEPSREESWVSIKKFIPGRRKKRADGKQEQAAVEDSGPGEINEDDPDVPAVVPLSEYDAVEREKLEAQRAQENVELPQLKGAVYVSEELSKTLVHTVSVAVIDGTRAVTSAEERSPSWISASMTEPLEHAEGVATPPVGEVTEKDITAEATPALAQTLPGGKDAHDDIVTSEVDFTSEAVTAAETTEALRAEELTEASGAEETTDMVSAVSQLSDSPDTTEEATPVQEVEGGMLDTEEQERQTQAVLQAVADKVKEDSQVPATQTLQRAGPKALEKVEEVEEDSEVLATEKEKDVVPEGPVQEAETEHLAQGSETVQATPESLEVPEVTEDVDRATTCQVIKHQQLMEQAVAPESSETLTDSETNGSTPLADSDTPNGTQQDETVDSQDSNAIAAVKQSQVTEEEAAAAQTEGPSTPSSFPAQEEHREKPGRDVLEPTQALAAGAVPILAKAEVGQEGEAGQFDGEKVKDGQCVKELEVPVHTGPNSQKTADLTRDSEVMEVARCQETESNEEQSISPEKREMGTDVEKEETETKTEQASEEHEQETAAPEHEGTHPKPVLTADMPHSERGKALGSLEGSPSLPDQDKADCIEVQVQSSDTPVTQTTEAVKKVEETVATSEMDESLECAGAQSLPAEKLSETGGYGTLQHGEDTVPQGPESQAESIPIIVTPAPESILHSDLQREVSASQKQRSDEDNKPDAGPDAAGKESAAREKILRAEPEILELESKSNKIVQSVIQTAVDQFARTETAPETHASDLQNQVPVMQADSQGAQQMLDKDESDLQVSPQDGTLSAVAQEGLAVSDSSEGMSKASEMITTLAVESASVKESVEKLPLQCKDEKEHAADGPQHQSLAKAEADASGNLTKESPDTNGPKLTEEGDALKEEMNKAQTEEDDLQEPKGDLTES</sequence>
<protein>
    <recommendedName>
        <fullName>A-kinase anchor protein 12</fullName>
        <shortName>AKAP-12</shortName>
    </recommendedName>
    <alternativeName>
        <fullName>Germ cell lineage protein gercelin</fullName>
    </alternativeName>
    <alternativeName>
        <fullName>Src-suppressed C kinase substrate</fullName>
        <shortName>SSeCKS</shortName>
    </alternativeName>
</protein>
<name>AKA12_MOUSE</name>